<organism>
    <name type="scientific">Solanum lycopersicum</name>
    <name type="common">Tomato</name>
    <name type="synonym">Lycopersicon esculentum</name>
    <dbReference type="NCBI Taxonomy" id="4081"/>
    <lineage>
        <taxon>Eukaryota</taxon>
        <taxon>Viridiplantae</taxon>
        <taxon>Streptophyta</taxon>
        <taxon>Embryophyta</taxon>
        <taxon>Tracheophyta</taxon>
        <taxon>Spermatophyta</taxon>
        <taxon>Magnoliopsida</taxon>
        <taxon>eudicotyledons</taxon>
        <taxon>Gunneridae</taxon>
        <taxon>Pentapetalae</taxon>
        <taxon>asterids</taxon>
        <taxon>lamiids</taxon>
        <taxon>Solanales</taxon>
        <taxon>Solanaceae</taxon>
        <taxon>Solanoideae</taxon>
        <taxon>Solaneae</taxon>
        <taxon>Solanum</taxon>
        <taxon>Solanum subgen. Lycopersicon</taxon>
    </lineage>
</organism>
<keyword id="KW-0489">Methyltransferase</keyword>
<keyword id="KW-1185">Reference proteome</keyword>
<keyword id="KW-0949">S-adenosyl-L-methionine</keyword>
<keyword id="KW-0808">Transferase</keyword>
<comment type="function">
    <text evidence="3">Flavonoid 3'-O-methyltransferase involved in the biosynthesis of polymethoxylated flavonoids natural products such as myricetin derivatives, aroma compounds possessing antioxidant properties and exhibiting pharmacological activities such as anti-carcinogen, anti-viral, anti-thrombotic, anti-diabetic, anti-atherosclerotic, and anti-inflammatory effects (PubMed:25128240). Catalyzes S-adenosylmethionine-dependent regioselective 3'-O-methylation of flavonoids; active on various hydroxylated flavonoid substrates, including myricetin, thus producing 3'-methyl myricetin (laricitrin) (PubMed:25128240).</text>
</comment>
<comment type="catalytic activity">
    <reaction evidence="3">
        <text>myricetin + S-adenosyl-L-methionine = laricitrin + S-adenosyl-L-homocysteine + H(+)</text>
        <dbReference type="Rhea" id="RHEA:25629"/>
        <dbReference type="ChEBI" id="CHEBI:15378"/>
        <dbReference type="ChEBI" id="CHEBI:57856"/>
        <dbReference type="ChEBI" id="CHEBI:58395"/>
        <dbReference type="ChEBI" id="CHEBI:59789"/>
        <dbReference type="ChEBI" id="CHEBI:60006"/>
        <dbReference type="EC" id="2.1.1.267"/>
    </reaction>
    <physiologicalReaction direction="left-to-right" evidence="3">
        <dbReference type="Rhea" id="RHEA:25630"/>
    </physiologicalReaction>
</comment>
<comment type="pathway">
    <text evidence="3">Flavonoid metabolism.</text>
</comment>
<comment type="subunit">
    <text evidence="1">Homodimer.</text>
</comment>
<comment type="tissue specificity">
    <text evidence="3">Mainly expressed in stem and petiole trichomes.</text>
</comment>
<comment type="disruption phenotype">
    <text evidence="3">Accumulation of 3-monomethyl myricetin but reduced levels of dimethylated and trimethylated myricetin.</text>
</comment>
<comment type="similarity">
    <text evidence="2">Belongs to the class I-like SAM-binding methyltransferase superfamily. Cation-independent O-methyltransferase family.</text>
</comment>
<comment type="caution">
    <text evidence="5">Absent in strains cv. Heinz 1706 and cv. Ailsa Craig.</text>
</comment>
<name>MOMT4_SOLLC</name>
<sequence length="362" mass="40771">MALSMDNIVISNEEEIYMMKAMHIPCGLYLNMVLRAAIELDLFEIIAKSTTQKLSSYEIASQIPTKNPNASSLVLERILRFLASQSFLTCNITKNDDGNVHTSYNLTPLSQSLISDKDGSSLAPFLLLHSESVVVNSCFLLKDAILQGEVPFNKAYGMNAFEYTKKDSRMNGLFNKAMQNVTCIEMKKIVECYNGFEGVKETIDVGGGLGISLASIISKYPNIKGINFDLPHVIKDAPTYEGIEHVGGDMLKSVPQGELIILKEILHNWDDEDCVKILKNCWRALPNDGKVVVIEQIQPEYPETNLLSKHLFALDISMMIMFHGGKERTKQQFEDLAKQAGFTSIKVMARAYYYWVIEFYKY</sequence>
<reference key="1">
    <citation type="journal article" date="2014" name="Plant Cell">
        <title>Analysis of natural and induced variation in tomato glandular trichome flavonoids identifies a gene not present in the reference genome.</title>
        <authorList>
            <person name="Kim J."/>
            <person name="Matsuba Y."/>
            <person name="Ning J."/>
            <person name="Schilmiller A.L."/>
            <person name="Hammar D."/>
            <person name="Jones A.D."/>
            <person name="Pichersky E."/>
            <person name="Last R.L."/>
        </authorList>
    </citation>
    <scope>NUCLEOTIDE SEQUENCE [GENOMIC DNA]</scope>
    <scope>FUNCTION</scope>
    <scope>MUTAGENESIS OF LEU-230</scope>
    <scope>DISRUPTION PHENOTYPE</scope>
    <scope>CATALYTIC ACTIVITY</scope>
    <scope>PATHWAY</scope>
    <scope>TISSUE SPECIFICITY</scope>
    <scope>GENE FAMILY</scope>
    <source>
        <strain>cv. Heinz 1706</strain>
        <strain>cv. JP117</strain>
        <strain>cv. M82</strain>
    </source>
</reference>
<reference key="2">
    <citation type="journal article" date="2019" name="Nat. Prod. Rep.">
        <title>Non-volatile natural products in plant glandular trichomes: chemistry, biological activities and biosynthesis.</title>
        <authorList>
            <person name="Liu Y."/>
            <person name="Jing S.-X."/>
            <person name="Luo S.-H."/>
            <person name="Li S.-H."/>
        </authorList>
    </citation>
    <scope>PATHWAY</scope>
    <scope>REVIEW</scope>
</reference>
<feature type="chain" id="PRO_0000457373" description="Myricetin 3'-O-methyltransferase 4">
    <location>
        <begin position="1"/>
        <end position="362"/>
    </location>
</feature>
<feature type="active site" description="Proton acceptor" evidence="2">
    <location>
        <position position="267"/>
    </location>
</feature>
<feature type="binding site" evidence="2">
    <location>
        <position position="229"/>
    </location>
    <ligand>
        <name>S-adenosyl-L-methionine</name>
        <dbReference type="ChEBI" id="CHEBI:59789"/>
    </ligand>
</feature>
<feature type="mutagenesis site" description="In JP446; impaired myricetin 3'-O-methyltransferase activity." evidence="3">
    <original>L</original>
    <variation>I</variation>
    <location>
        <position position="230"/>
    </location>
</feature>
<accession>A0A088MF62</accession>
<dbReference type="EC" id="2.1.1.267" evidence="2 3"/>
<dbReference type="EMBL" id="KF740343">
    <property type="protein sequence ID" value="AIN36846.1"/>
    <property type="molecule type" value="Genomic_DNA"/>
</dbReference>
<dbReference type="SMR" id="A0A088MF62"/>
<dbReference type="Proteomes" id="UP000004994">
    <property type="component" value="Unplaced"/>
</dbReference>
<dbReference type="GO" id="GO:0033799">
    <property type="term" value="F:myricetin 3'-O-methyltransferase activity"/>
    <property type="evidence" value="ECO:0000314"/>
    <property type="project" value="UniProtKB"/>
</dbReference>
<dbReference type="GO" id="GO:0008171">
    <property type="term" value="F:O-methyltransferase activity"/>
    <property type="evidence" value="ECO:0000318"/>
    <property type="project" value="GO_Central"/>
</dbReference>
<dbReference type="GO" id="GO:0046983">
    <property type="term" value="F:protein dimerization activity"/>
    <property type="evidence" value="ECO:0007669"/>
    <property type="project" value="InterPro"/>
</dbReference>
<dbReference type="GO" id="GO:0008757">
    <property type="term" value="F:S-adenosylmethionine-dependent methyltransferase activity"/>
    <property type="evidence" value="ECO:0000318"/>
    <property type="project" value="GO_Central"/>
</dbReference>
<dbReference type="GO" id="GO:0009058">
    <property type="term" value="P:biosynthetic process"/>
    <property type="evidence" value="ECO:0000318"/>
    <property type="project" value="GO_Central"/>
</dbReference>
<dbReference type="GO" id="GO:0009813">
    <property type="term" value="P:flavonoid biosynthetic process"/>
    <property type="evidence" value="ECO:0000314"/>
    <property type="project" value="UniProtKB"/>
</dbReference>
<dbReference type="GO" id="GO:0032259">
    <property type="term" value="P:methylation"/>
    <property type="evidence" value="ECO:0000318"/>
    <property type="project" value="GO_Central"/>
</dbReference>
<dbReference type="CDD" id="cd02440">
    <property type="entry name" value="AdoMet_MTases"/>
    <property type="match status" value="1"/>
</dbReference>
<dbReference type="FunFam" id="1.10.10.10:FF:000357">
    <property type="entry name" value="Caffeic acid 3-O-methyltransferase"/>
    <property type="match status" value="1"/>
</dbReference>
<dbReference type="FunFam" id="3.40.50.150:FF:000061">
    <property type="entry name" value="Caffeic acid O-methyltransferase"/>
    <property type="match status" value="1"/>
</dbReference>
<dbReference type="Gene3D" id="3.40.50.150">
    <property type="entry name" value="Vaccinia Virus protein VP39"/>
    <property type="match status" value="1"/>
</dbReference>
<dbReference type="Gene3D" id="1.10.10.10">
    <property type="entry name" value="Winged helix-like DNA-binding domain superfamily/Winged helix DNA-binding domain"/>
    <property type="match status" value="1"/>
</dbReference>
<dbReference type="InterPro" id="IPR016461">
    <property type="entry name" value="COMT-like"/>
</dbReference>
<dbReference type="InterPro" id="IPR001077">
    <property type="entry name" value="O_MeTrfase_dom"/>
</dbReference>
<dbReference type="InterPro" id="IPR012967">
    <property type="entry name" value="Plant_O-MeTrfase_dimerisation"/>
</dbReference>
<dbReference type="InterPro" id="IPR029063">
    <property type="entry name" value="SAM-dependent_MTases_sf"/>
</dbReference>
<dbReference type="InterPro" id="IPR036388">
    <property type="entry name" value="WH-like_DNA-bd_sf"/>
</dbReference>
<dbReference type="InterPro" id="IPR036390">
    <property type="entry name" value="WH_DNA-bd_sf"/>
</dbReference>
<dbReference type="PANTHER" id="PTHR11746">
    <property type="entry name" value="O-METHYLTRANSFERASE"/>
    <property type="match status" value="1"/>
</dbReference>
<dbReference type="Pfam" id="PF08100">
    <property type="entry name" value="Dimerisation"/>
    <property type="match status" value="1"/>
</dbReference>
<dbReference type="Pfam" id="PF00891">
    <property type="entry name" value="Methyltransf_2"/>
    <property type="match status" value="1"/>
</dbReference>
<dbReference type="PIRSF" id="PIRSF005739">
    <property type="entry name" value="O-mtase"/>
    <property type="match status" value="1"/>
</dbReference>
<dbReference type="SUPFAM" id="SSF53335">
    <property type="entry name" value="S-adenosyl-L-methionine-dependent methyltransferases"/>
    <property type="match status" value="1"/>
</dbReference>
<dbReference type="SUPFAM" id="SSF46785">
    <property type="entry name" value="Winged helix' DNA-binding domain"/>
    <property type="match status" value="1"/>
</dbReference>
<dbReference type="PROSITE" id="PS51683">
    <property type="entry name" value="SAM_OMT_II"/>
    <property type="match status" value="1"/>
</dbReference>
<gene>
    <name evidence="4" type="primary">MOMT4</name>
</gene>
<evidence type="ECO:0000250" key="1">
    <source>
        <dbReference type="UniProtKB" id="Q7XB10"/>
    </source>
</evidence>
<evidence type="ECO:0000255" key="2">
    <source>
        <dbReference type="PROSITE-ProRule" id="PRU01020"/>
    </source>
</evidence>
<evidence type="ECO:0000269" key="3">
    <source>
    </source>
</evidence>
<evidence type="ECO:0000303" key="4">
    <source>
    </source>
</evidence>
<evidence type="ECO:0000305" key="5">
    <source>
    </source>
</evidence>
<proteinExistence type="evidence at protein level"/>
<protein>
    <recommendedName>
        <fullName evidence="4">Myricetin 3'-O-methyltransferase 4</fullName>
        <shortName evidence="4">SlMOMT4</shortName>
        <ecNumber evidence="2 3">2.1.1.267</ecNumber>
    </recommendedName>
</protein>